<protein>
    <recommendedName>
        <fullName evidence="1">Protein translocase subunit SecA</fullName>
        <ecNumber evidence="1">7.4.2.8</ecNumber>
    </recommendedName>
</protein>
<gene>
    <name evidence="1" type="primary">secA</name>
    <name type="ordered locus">CHAB381_0938</name>
</gene>
<name>SECA_CAMHC</name>
<accession>A7I1V8</accession>
<dbReference type="EC" id="7.4.2.8" evidence="1"/>
<dbReference type="EMBL" id="CP000776">
    <property type="protein sequence ID" value="ABS50948.1"/>
    <property type="molecule type" value="Genomic_DNA"/>
</dbReference>
<dbReference type="RefSeq" id="WP_012108791.1">
    <property type="nucleotide sequence ID" value="NC_009714.1"/>
</dbReference>
<dbReference type="SMR" id="A7I1V8"/>
<dbReference type="STRING" id="360107.CHAB381_0938"/>
<dbReference type="KEGG" id="cha:CHAB381_0938"/>
<dbReference type="eggNOG" id="COG0653">
    <property type="taxonomic scope" value="Bacteria"/>
</dbReference>
<dbReference type="HOGENOM" id="CLU_005314_3_0_7"/>
<dbReference type="OrthoDB" id="9805579at2"/>
<dbReference type="Proteomes" id="UP000002407">
    <property type="component" value="Chromosome"/>
</dbReference>
<dbReference type="GO" id="GO:0031522">
    <property type="term" value="C:cell envelope Sec protein transport complex"/>
    <property type="evidence" value="ECO:0007669"/>
    <property type="project" value="TreeGrafter"/>
</dbReference>
<dbReference type="GO" id="GO:0005829">
    <property type="term" value="C:cytosol"/>
    <property type="evidence" value="ECO:0007669"/>
    <property type="project" value="TreeGrafter"/>
</dbReference>
<dbReference type="GO" id="GO:0005886">
    <property type="term" value="C:plasma membrane"/>
    <property type="evidence" value="ECO:0007669"/>
    <property type="project" value="UniProtKB-SubCell"/>
</dbReference>
<dbReference type="GO" id="GO:0005524">
    <property type="term" value="F:ATP binding"/>
    <property type="evidence" value="ECO:0007669"/>
    <property type="project" value="UniProtKB-UniRule"/>
</dbReference>
<dbReference type="GO" id="GO:0046872">
    <property type="term" value="F:metal ion binding"/>
    <property type="evidence" value="ECO:0007669"/>
    <property type="project" value="UniProtKB-KW"/>
</dbReference>
<dbReference type="GO" id="GO:0008564">
    <property type="term" value="F:protein-exporting ATPase activity"/>
    <property type="evidence" value="ECO:0007669"/>
    <property type="project" value="UniProtKB-EC"/>
</dbReference>
<dbReference type="GO" id="GO:0065002">
    <property type="term" value="P:intracellular protein transmembrane transport"/>
    <property type="evidence" value="ECO:0007669"/>
    <property type="project" value="UniProtKB-UniRule"/>
</dbReference>
<dbReference type="GO" id="GO:0017038">
    <property type="term" value="P:protein import"/>
    <property type="evidence" value="ECO:0007669"/>
    <property type="project" value="InterPro"/>
</dbReference>
<dbReference type="GO" id="GO:0006605">
    <property type="term" value="P:protein targeting"/>
    <property type="evidence" value="ECO:0007669"/>
    <property type="project" value="UniProtKB-UniRule"/>
</dbReference>
<dbReference type="GO" id="GO:0043952">
    <property type="term" value="P:protein transport by the Sec complex"/>
    <property type="evidence" value="ECO:0007669"/>
    <property type="project" value="TreeGrafter"/>
</dbReference>
<dbReference type="CDD" id="cd17928">
    <property type="entry name" value="DEXDc_SecA"/>
    <property type="match status" value="1"/>
</dbReference>
<dbReference type="CDD" id="cd18803">
    <property type="entry name" value="SF2_C_secA"/>
    <property type="match status" value="1"/>
</dbReference>
<dbReference type="FunFam" id="3.40.50.300:FF:000429">
    <property type="entry name" value="Preprotein translocase subunit SecA"/>
    <property type="match status" value="1"/>
</dbReference>
<dbReference type="FunFam" id="3.90.1440.10:FF:000002">
    <property type="entry name" value="Protein translocase subunit SecA"/>
    <property type="match status" value="1"/>
</dbReference>
<dbReference type="Gene3D" id="1.10.3060.10">
    <property type="entry name" value="Helical scaffold and wing domains of SecA"/>
    <property type="match status" value="1"/>
</dbReference>
<dbReference type="Gene3D" id="3.40.50.300">
    <property type="entry name" value="P-loop containing nucleotide triphosphate hydrolases"/>
    <property type="match status" value="3"/>
</dbReference>
<dbReference type="Gene3D" id="3.90.1440.10">
    <property type="entry name" value="SecA, preprotein cross-linking domain"/>
    <property type="match status" value="1"/>
</dbReference>
<dbReference type="HAMAP" id="MF_01382">
    <property type="entry name" value="SecA"/>
    <property type="match status" value="1"/>
</dbReference>
<dbReference type="InterPro" id="IPR014001">
    <property type="entry name" value="Helicase_ATP-bd"/>
</dbReference>
<dbReference type="InterPro" id="IPR001650">
    <property type="entry name" value="Helicase_C-like"/>
</dbReference>
<dbReference type="InterPro" id="IPR027417">
    <property type="entry name" value="P-loop_NTPase"/>
</dbReference>
<dbReference type="InterPro" id="IPR004027">
    <property type="entry name" value="SEC_C_motif"/>
</dbReference>
<dbReference type="InterPro" id="IPR000185">
    <property type="entry name" value="SecA"/>
</dbReference>
<dbReference type="InterPro" id="IPR011115">
    <property type="entry name" value="SecA_DEAD"/>
</dbReference>
<dbReference type="InterPro" id="IPR014018">
    <property type="entry name" value="SecA_motor_DEAD"/>
</dbReference>
<dbReference type="InterPro" id="IPR011130">
    <property type="entry name" value="SecA_preprotein_X-link_dom"/>
</dbReference>
<dbReference type="InterPro" id="IPR044722">
    <property type="entry name" value="SecA_SF2_C"/>
</dbReference>
<dbReference type="InterPro" id="IPR011116">
    <property type="entry name" value="SecA_Wing/Scaffold"/>
</dbReference>
<dbReference type="InterPro" id="IPR036266">
    <property type="entry name" value="SecA_Wing/Scaffold_sf"/>
</dbReference>
<dbReference type="InterPro" id="IPR036670">
    <property type="entry name" value="SecA_X-link_sf"/>
</dbReference>
<dbReference type="NCBIfam" id="NF006630">
    <property type="entry name" value="PRK09200.1"/>
    <property type="match status" value="1"/>
</dbReference>
<dbReference type="NCBIfam" id="NF009538">
    <property type="entry name" value="PRK12904.1"/>
    <property type="match status" value="1"/>
</dbReference>
<dbReference type="NCBIfam" id="TIGR00963">
    <property type="entry name" value="secA"/>
    <property type="match status" value="1"/>
</dbReference>
<dbReference type="PANTHER" id="PTHR30612:SF0">
    <property type="entry name" value="CHLOROPLAST PROTEIN-TRANSPORTING ATPASE"/>
    <property type="match status" value="1"/>
</dbReference>
<dbReference type="PANTHER" id="PTHR30612">
    <property type="entry name" value="SECA INNER MEMBRANE COMPONENT OF SEC PROTEIN SECRETION SYSTEM"/>
    <property type="match status" value="1"/>
</dbReference>
<dbReference type="Pfam" id="PF21090">
    <property type="entry name" value="P-loop_SecA"/>
    <property type="match status" value="1"/>
</dbReference>
<dbReference type="Pfam" id="PF02810">
    <property type="entry name" value="SEC-C"/>
    <property type="match status" value="1"/>
</dbReference>
<dbReference type="Pfam" id="PF07517">
    <property type="entry name" value="SecA_DEAD"/>
    <property type="match status" value="1"/>
</dbReference>
<dbReference type="Pfam" id="PF01043">
    <property type="entry name" value="SecA_PP_bind"/>
    <property type="match status" value="1"/>
</dbReference>
<dbReference type="Pfam" id="PF07516">
    <property type="entry name" value="SecA_SW"/>
    <property type="match status" value="1"/>
</dbReference>
<dbReference type="PRINTS" id="PR00906">
    <property type="entry name" value="SECA"/>
</dbReference>
<dbReference type="SMART" id="SM00490">
    <property type="entry name" value="HELICc"/>
    <property type="match status" value="1"/>
</dbReference>
<dbReference type="SMART" id="SM00957">
    <property type="entry name" value="SecA_DEAD"/>
    <property type="match status" value="1"/>
</dbReference>
<dbReference type="SMART" id="SM00958">
    <property type="entry name" value="SecA_PP_bind"/>
    <property type="match status" value="1"/>
</dbReference>
<dbReference type="SUPFAM" id="SSF81886">
    <property type="entry name" value="Helical scaffold and wing domains of SecA"/>
    <property type="match status" value="1"/>
</dbReference>
<dbReference type="SUPFAM" id="SSF52540">
    <property type="entry name" value="P-loop containing nucleoside triphosphate hydrolases"/>
    <property type="match status" value="2"/>
</dbReference>
<dbReference type="SUPFAM" id="SSF81767">
    <property type="entry name" value="Pre-protein crosslinking domain of SecA"/>
    <property type="match status" value="1"/>
</dbReference>
<dbReference type="PROSITE" id="PS51196">
    <property type="entry name" value="SECA_MOTOR_DEAD"/>
    <property type="match status" value="1"/>
</dbReference>
<sequence>MIQKALGKIFGTKNDRIVKAYAKRVAKINALEPTYEKLSDDELKDKFSKLKEQVLAQKLTLDDALYDVFAIVREASKRVLKMRHFDVQLIGGMVLHDGNIAEMKTGEGKTLVATLPVVLNAMNKKGVHVVTVNDYLAKRDAADMGVLYNFLGFSVGVILGGNYDDKARKEAYNCDITYGTNNEFGFDYLRDNMKFRKEDKVQRGHNFVIVDEVDSILIDEARTPLIISGPTNRTLDGYIKANEVAKQMKCGEPADPLDKNSKATGDFTLDEKNRAVMITEAGISKAEKLFGVDNLYSLDNAVLSHYLDQALKANYLFEKDVHYVVKDGQVVIVDEFTGRLSEGRRFSEGLHQALEAKEGVKIQEESQTLADITFQNYFRLYDKLSGMTGTAQTEATEFSQIYKLEVISIPTNLPVKRIDQNDLIYKTEKEKFDAVIAQIKYLHAKGQPVLVGTASIEKSEKLHELLTKEKINHSVLNAKNHEKEAQIIANAGDKGAVTIATNMAGRGVDIKINDEVRALGGLYILGTERHESRRIDNQLRGRSGRQGDPGESRFYLSLEDNLLRIFGSDKIKHIMERLGLKEGESIESRLVTKAVENAQKKVESLHFESRKYILEYDDVANEQRKVIYRYRNELLEADFDLHDKIISNREDYIANVLDRLEIFDGDSKENFDIQKITSIIKSETTEILDENKLSKAEDYKELKEEIIKELRDFYEEKMAPVDNEQRKSIEKMLYLQIVDRDWREHLYQMDILKTGIGLRGYNHRDPLTEYKKESYNLFVELVMRLKSDSIRTLHSIRFKTQEEIEAERRAIAELQAKLQEEEQKKLKMSGADKGGEDLEETKNVPYRAPKKIGRNEPCPCGSGKKYKDCHGKSGPKKGLFANND</sequence>
<feature type="chain" id="PRO_0000320764" description="Protein translocase subunit SecA">
    <location>
        <begin position="1"/>
        <end position="884"/>
    </location>
</feature>
<feature type="region of interest" description="Disordered" evidence="2">
    <location>
        <begin position="822"/>
        <end position="884"/>
    </location>
</feature>
<feature type="compositionally biased region" description="Basic and acidic residues" evidence="2">
    <location>
        <begin position="833"/>
        <end position="842"/>
    </location>
</feature>
<feature type="binding site" evidence="1">
    <location>
        <position position="88"/>
    </location>
    <ligand>
        <name>ATP</name>
        <dbReference type="ChEBI" id="CHEBI:30616"/>
    </ligand>
</feature>
<feature type="binding site" evidence="1">
    <location>
        <begin position="106"/>
        <end position="110"/>
    </location>
    <ligand>
        <name>ATP</name>
        <dbReference type="ChEBI" id="CHEBI:30616"/>
    </ligand>
</feature>
<feature type="binding site" evidence="1">
    <location>
        <position position="509"/>
    </location>
    <ligand>
        <name>ATP</name>
        <dbReference type="ChEBI" id="CHEBI:30616"/>
    </ligand>
</feature>
<feature type="binding site" evidence="1">
    <location>
        <position position="858"/>
    </location>
    <ligand>
        <name>Zn(2+)</name>
        <dbReference type="ChEBI" id="CHEBI:29105"/>
    </ligand>
</feature>
<feature type="binding site" evidence="1">
    <location>
        <position position="860"/>
    </location>
    <ligand>
        <name>Zn(2+)</name>
        <dbReference type="ChEBI" id="CHEBI:29105"/>
    </ligand>
</feature>
<feature type="binding site" evidence="1">
    <location>
        <position position="869"/>
    </location>
    <ligand>
        <name>Zn(2+)</name>
        <dbReference type="ChEBI" id="CHEBI:29105"/>
    </ligand>
</feature>
<feature type="binding site" evidence="1">
    <location>
        <position position="870"/>
    </location>
    <ligand>
        <name>Zn(2+)</name>
        <dbReference type="ChEBI" id="CHEBI:29105"/>
    </ligand>
</feature>
<evidence type="ECO:0000255" key="1">
    <source>
        <dbReference type="HAMAP-Rule" id="MF_01382"/>
    </source>
</evidence>
<evidence type="ECO:0000256" key="2">
    <source>
        <dbReference type="SAM" id="MobiDB-lite"/>
    </source>
</evidence>
<organism>
    <name type="scientific">Campylobacter hominis (strain ATCC BAA-381 / DSM 21671 / CCUG 45161 / LMG 19568 / NCTC 13146 / CH001A)</name>
    <dbReference type="NCBI Taxonomy" id="360107"/>
    <lineage>
        <taxon>Bacteria</taxon>
        <taxon>Pseudomonadati</taxon>
        <taxon>Campylobacterota</taxon>
        <taxon>Epsilonproteobacteria</taxon>
        <taxon>Campylobacterales</taxon>
        <taxon>Campylobacteraceae</taxon>
        <taxon>Campylobacter</taxon>
    </lineage>
</organism>
<reference key="1">
    <citation type="submission" date="2007-07" db="EMBL/GenBank/DDBJ databases">
        <title>Complete genome sequence of Campylobacter hominis ATCC BAA-381, a commensal isolated from the human gastrointestinal tract.</title>
        <authorList>
            <person name="Fouts D.E."/>
            <person name="Mongodin E.F."/>
            <person name="Puiu D."/>
            <person name="Sebastian Y."/>
            <person name="Miller W.G."/>
            <person name="Mandrell R.E."/>
            <person name="Nelson K.E."/>
        </authorList>
    </citation>
    <scope>NUCLEOTIDE SEQUENCE [LARGE SCALE GENOMIC DNA]</scope>
    <source>
        <strain>ATCC BAA-381 / DSM 21671 / CCUG 45161 / LMG 19568 / NCTC 13146 / CH001A</strain>
    </source>
</reference>
<comment type="function">
    <text evidence="1">Part of the Sec protein translocase complex. Interacts with the SecYEG preprotein conducting channel. Has a central role in coupling the hydrolysis of ATP to the transfer of proteins into and across the cell membrane, serving as an ATP-driven molecular motor driving the stepwise translocation of polypeptide chains across the membrane.</text>
</comment>
<comment type="catalytic activity">
    <reaction evidence="1">
        <text>ATP + H2O + cellular proteinSide 1 = ADP + phosphate + cellular proteinSide 2.</text>
        <dbReference type="EC" id="7.4.2.8"/>
    </reaction>
</comment>
<comment type="cofactor">
    <cofactor evidence="1">
        <name>Zn(2+)</name>
        <dbReference type="ChEBI" id="CHEBI:29105"/>
    </cofactor>
    <text evidence="1">May bind 1 zinc ion per subunit.</text>
</comment>
<comment type="subunit">
    <text evidence="1">Monomer and homodimer. Part of the essential Sec protein translocation apparatus which comprises SecA, SecYEG and auxiliary proteins SecDF-YajC and YidC.</text>
</comment>
<comment type="subcellular location">
    <subcellularLocation>
        <location evidence="1">Cell inner membrane</location>
        <topology evidence="1">Peripheral membrane protein</topology>
        <orientation evidence="1">Cytoplasmic side</orientation>
    </subcellularLocation>
    <subcellularLocation>
        <location evidence="1">Cytoplasm</location>
    </subcellularLocation>
    <text evidence="1">Distribution is 50-50.</text>
</comment>
<comment type="similarity">
    <text evidence="1">Belongs to the SecA family.</text>
</comment>
<proteinExistence type="inferred from homology"/>
<keyword id="KW-0067">ATP-binding</keyword>
<keyword id="KW-0997">Cell inner membrane</keyword>
<keyword id="KW-1003">Cell membrane</keyword>
<keyword id="KW-0963">Cytoplasm</keyword>
<keyword id="KW-0472">Membrane</keyword>
<keyword id="KW-0479">Metal-binding</keyword>
<keyword id="KW-0547">Nucleotide-binding</keyword>
<keyword id="KW-0653">Protein transport</keyword>
<keyword id="KW-1185">Reference proteome</keyword>
<keyword id="KW-1278">Translocase</keyword>
<keyword id="KW-0811">Translocation</keyword>
<keyword id="KW-0813">Transport</keyword>
<keyword id="KW-0862">Zinc</keyword>